<gene>
    <name type="primary">EXO70</name>
    <name type="ORF">FGRRES_01919</name>
    <name type="ORF">FGSG_01919</name>
</gene>
<sequence>MSVGLAGGAHTALDEEARAEVDVLNSRLEKTTQLTKKIQSCLNRLETTGKSVQDVAGPLNGETRRLQILGNNVDSVLAAIDRLRQPADSKNDEEQIIRVGPEKAGLSTYLASIKRLGKALAEMQASNLRANQQTMADLSRLIKSGNSQLEHHFETVLRGETPRSVEPLHYITKDKPFPTLPQDKIARLGLIYSYVVESHHNGASELAHIYAEVRGPYLSASLANLAAASVNTAKKKSPDAVYRAGTNGMGTYAQAMEGLFISEYDNVCSVFSREDWGVIFLSTCQTALAEQARCLRELNAHIKSHLNTDCYLAYEITEIISALSGKLETRTGELKGALAAALKPVRETAKSSLAELLEETRRKVGMLQILPSDGAPIPLVSETMQRLQTMVHFLRPISSIMISIGDGGWKANAATNGRSTDAIPSLASFDIGADGKEIFSHYCLDTIEMLLSGLDQKSRVLMKSRAVAGVFMANSVVIIGRMVQTSELNDLLENKLDILEQWRKKATASYTDICKDLSVHLFDTVHTNRTNRPTSGPVDSTSIVKGLGSKDKDKIKEKFTQFNGAFDDMVSRHKSYSMEREVRRIFGEDIRQKLQPLYERFWDRYHEIDKGKGKYVKYDKTSIAAVFASLAS</sequence>
<protein>
    <recommendedName>
        <fullName>Exocyst complex protein EXO70</fullName>
    </recommendedName>
</protein>
<name>EXO70_GIBZE</name>
<accession>Q4ILI9</accession>
<accession>A0A0E0RS99</accession>
<accession>V6R5X0</accession>
<comment type="function">
    <text evidence="1">Involved in the secretory pathway as part of the exocyst complex which tethers secretory vesicles to the sites of exocytosis. Also plays a role in the assembly of the exocyst (By similarity).</text>
</comment>
<comment type="subcellular location">
    <subcellularLocation>
        <location evidence="1">Bud</location>
    </subcellularLocation>
    <subcellularLocation>
        <location evidence="1">Bud neck</location>
    </subcellularLocation>
</comment>
<comment type="similarity">
    <text evidence="2">Belongs to the EXO70 family.</text>
</comment>
<organism>
    <name type="scientific">Gibberella zeae (strain ATCC MYA-4620 / CBS 123657 / FGSC 9075 / NRRL 31084 / PH-1)</name>
    <name type="common">Wheat head blight fungus</name>
    <name type="synonym">Fusarium graminearum</name>
    <dbReference type="NCBI Taxonomy" id="229533"/>
    <lineage>
        <taxon>Eukaryota</taxon>
        <taxon>Fungi</taxon>
        <taxon>Dikarya</taxon>
        <taxon>Ascomycota</taxon>
        <taxon>Pezizomycotina</taxon>
        <taxon>Sordariomycetes</taxon>
        <taxon>Hypocreomycetidae</taxon>
        <taxon>Hypocreales</taxon>
        <taxon>Nectriaceae</taxon>
        <taxon>Fusarium</taxon>
    </lineage>
</organism>
<feature type="chain" id="PRO_0000118970" description="Exocyst complex protein EXO70">
    <location>
        <begin position="1"/>
        <end position="632"/>
    </location>
</feature>
<dbReference type="EMBL" id="DS231663">
    <property type="protein sequence ID" value="ESU07285.1"/>
    <property type="molecule type" value="Genomic_DNA"/>
</dbReference>
<dbReference type="EMBL" id="HG970332">
    <property type="protein sequence ID" value="CEF74124.1"/>
    <property type="molecule type" value="Genomic_DNA"/>
</dbReference>
<dbReference type="RefSeq" id="XP_011317770.1">
    <property type="nucleotide sequence ID" value="XM_011319468.1"/>
</dbReference>
<dbReference type="SMR" id="Q4ILI9"/>
<dbReference type="FunCoup" id="Q4ILI9">
    <property type="interactions" value="133"/>
</dbReference>
<dbReference type="STRING" id="229533.Q4ILI9"/>
<dbReference type="GeneID" id="23549330"/>
<dbReference type="KEGG" id="fgr:FGSG_01919"/>
<dbReference type="VEuPathDB" id="FungiDB:FGRAMPH1_01G04635"/>
<dbReference type="eggNOG" id="KOG2344">
    <property type="taxonomic scope" value="Eukaryota"/>
</dbReference>
<dbReference type="HOGENOM" id="CLU_010236_4_2_1"/>
<dbReference type="InParanoid" id="Q4ILI9"/>
<dbReference type="OrthoDB" id="85072at110618"/>
<dbReference type="Proteomes" id="UP000070720">
    <property type="component" value="Chromosome 1"/>
</dbReference>
<dbReference type="GO" id="GO:0005935">
    <property type="term" value="C:cellular bud neck"/>
    <property type="evidence" value="ECO:0007669"/>
    <property type="project" value="UniProtKB-SubCell"/>
</dbReference>
<dbReference type="GO" id="GO:0000145">
    <property type="term" value="C:exocyst"/>
    <property type="evidence" value="ECO:0007669"/>
    <property type="project" value="InterPro"/>
</dbReference>
<dbReference type="GO" id="GO:0005546">
    <property type="term" value="F:phosphatidylinositol-4,5-bisphosphate binding"/>
    <property type="evidence" value="ECO:0007669"/>
    <property type="project" value="InterPro"/>
</dbReference>
<dbReference type="GO" id="GO:0006887">
    <property type="term" value="P:exocytosis"/>
    <property type="evidence" value="ECO:0007669"/>
    <property type="project" value="UniProtKB-KW"/>
</dbReference>
<dbReference type="GO" id="GO:0015031">
    <property type="term" value="P:protein transport"/>
    <property type="evidence" value="ECO:0007669"/>
    <property type="project" value="UniProtKB-KW"/>
</dbReference>
<dbReference type="Gene3D" id="1.20.1280.170">
    <property type="entry name" value="Exocyst complex component Exo70"/>
    <property type="match status" value="1"/>
</dbReference>
<dbReference type="InterPro" id="IPR016159">
    <property type="entry name" value="Cullin_repeat-like_dom_sf"/>
</dbReference>
<dbReference type="InterPro" id="IPR004140">
    <property type="entry name" value="Exo70"/>
</dbReference>
<dbReference type="InterPro" id="IPR046364">
    <property type="entry name" value="Exo70_C"/>
</dbReference>
<dbReference type="PANTHER" id="PTHR12542:SF41">
    <property type="entry name" value="EXOCYST COMPLEX COMPONENT 7"/>
    <property type="match status" value="1"/>
</dbReference>
<dbReference type="PANTHER" id="PTHR12542">
    <property type="entry name" value="EXOCYST COMPLEX PROTEIN EXO70"/>
    <property type="match status" value="1"/>
</dbReference>
<dbReference type="Pfam" id="PF03081">
    <property type="entry name" value="Exo70_C"/>
    <property type="match status" value="1"/>
</dbReference>
<dbReference type="Pfam" id="PF20669">
    <property type="entry name" value="Exo70_N"/>
    <property type="match status" value="1"/>
</dbReference>
<dbReference type="SUPFAM" id="SSF74788">
    <property type="entry name" value="Cullin repeat-like"/>
    <property type="match status" value="1"/>
</dbReference>
<keyword id="KW-0268">Exocytosis</keyword>
<keyword id="KW-0653">Protein transport</keyword>
<keyword id="KW-1185">Reference proteome</keyword>
<keyword id="KW-0813">Transport</keyword>
<evidence type="ECO:0000250" key="1"/>
<evidence type="ECO:0000305" key="2"/>
<proteinExistence type="inferred from homology"/>
<reference key="1">
    <citation type="journal article" date="2007" name="Science">
        <title>The Fusarium graminearum genome reveals a link between localized polymorphism and pathogen specialization.</title>
        <authorList>
            <person name="Cuomo C.A."/>
            <person name="Gueldener U."/>
            <person name="Xu J.-R."/>
            <person name="Trail F."/>
            <person name="Turgeon B.G."/>
            <person name="Di Pietro A."/>
            <person name="Walton J.D."/>
            <person name="Ma L.-J."/>
            <person name="Baker S.E."/>
            <person name="Rep M."/>
            <person name="Adam G."/>
            <person name="Antoniw J."/>
            <person name="Baldwin T."/>
            <person name="Calvo S.E."/>
            <person name="Chang Y.-L."/>
            <person name="DeCaprio D."/>
            <person name="Gale L.R."/>
            <person name="Gnerre S."/>
            <person name="Goswami R.S."/>
            <person name="Hammond-Kosack K."/>
            <person name="Harris L.J."/>
            <person name="Hilburn K."/>
            <person name="Kennell J.C."/>
            <person name="Kroken S."/>
            <person name="Magnuson J.K."/>
            <person name="Mannhaupt G."/>
            <person name="Mauceli E.W."/>
            <person name="Mewes H.-W."/>
            <person name="Mitterbauer R."/>
            <person name="Muehlbauer G."/>
            <person name="Muensterkoetter M."/>
            <person name="Nelson D."/>
            <person name="O'Donnell K."/>
            <person name="Ouellet T."/>
            <person name="Qi W."/>
            <person name="Quesneville H."/>
            <person name="Roncero M.I.G."/>
            <person name="Seong K.-Y."/>
            <person name="Tetko I.V."/>
            <person name="Urban M."/>
            <person name="Waalwijk C."/>
            <person name="Ward T.J."/>
            <person name="Yao J."/>
            <person name="Birren B.W."/>
            <person name="Kistler H.C."/>
        </authorList>
    </citation>
    <scope>NUCLEOTIDE SEQUENCE [LARGE SCALE GENOMIC DNA]</scope>
    <source>
        <strain>ATCC MYA-4620 / CBS 123657 / FGSC 9075 / NRRL 31084 / PH-1</strain>
    </source>
</reference>
<reference key="2">
    <citation type="journal article" date="2010" name="Nature">
        <title>Comparative genomics reveals mobile pathogenicity chromosomes in Fusarium.</title>
        <authorList>
            <person name="Ma L.-J."/>
            <person name="van der Does H.C."/>
            <person name="Borkovich K.A."/>
            <person name="Coleman J.J."/>
            <person name="Daboussi M.-J."/>
            <person name="Di Pietro A."/>
            <person name="Dufresne M."/>
            <person name="Freitag M."/>
            <person name="Grabherr M."/>
            <person name="Henrissat B."/>
            <person name="Houterman P.M."/>
            <person name="Kang S."/>
            <person name="Shim W.-B."/>
            <person name="Woloshuk C."/>
            <person name="Xie X."/>
            <person name="Xu J.-R."/>
            <person name="Antoniw J."/>
            <person name="Baker S.E."/>
            <person name="Bluhm B.H."/>
            <person name="Breakspear A."/>
            <person name="Brown D.W."/>
            <person name="Butchko R.A.E."/>
            <person name="Chapman S."/>
            <person name="Coulson R."/>
            <person name="Coutinho P.M."/>
            <person name="Danchin E.G.J."/>
            <person name="Diener A."/>
            <person name="Gale L.R."/>
            <person name="Gardiner D.M."/>
            <person name="Goff S."/>
            <person name="Hammond-Kosack K.E."/>
            <person name="Hilburn K."/>
            <person name="Hua-Van A."/>
            <person name="Jonkers W."/>
            <person name="Kazan K."/>
            <person name="Kodira C.D."/>
            <person name="Koehrsen M."/>
            <person name="Kumar L."/>
            <person name="Lee Y.-H."/>
            <person name="Li L."/>
            <person name="Manners J.M."/>
            <person name="Miranda-Saavedra D."/>
            <person name="Mukherjee M."/>
            <person name="Park G."/>
            <person name="Park J."/>
            <person name="Park S.-Y."/>
            <person name="Proctor R.H."/>
            <person name="Regev A."/>
            <person name="Ruiz-Roldan M.C."/>
            <person name="Sain D."/>
            <person name="Sakthikumar S."/>
            <person name="Sykes S."/>
            <person name="Schwartz D.C."/>
            <person name="Turgeon B.G."/>
            <person name="Wapinski I."/>
            <person name="Yoder O."/>
            <person name="Young S."/>
            <person name="Zeng Q."/>
            <person name="Zhou S."/>
            <person name="Galagan J."/>
            <person name="Cuomo C.A."/>
            <person name="Kistler H.C."/>
            <person name="Rep M."/>
        </authorList>
    </citation>
    <scope>GENOME REANNOTATION</scope>
    <source>
        <strain>ATCC MYA-4620 / CBS 123657 / FGSC 9075 / NRRL 31084 / PH-1</strain>
    </source>
</reference>
<reference key="3">
    <citation type="journal article" date="2015" name="BMC Genomics">
        <title>The completed genome sequence of the pathogenic ascomycete fungus Fusarium graminearum.</title>
        <authorList>
            <person name="King R."/>
            <person name="Urban M."/>
            <person name="Hammond-Kosack M.C.U."/>
            <person name="Hassani-Pak K."/>
            <person name="Hammond-Kosack K.E."/>
        </authorList>
    </citation>
    <scope>NUCLEOTIDE SEQUENCE [LARGE SCALE GENOMIC DNA]</scope>
    <source>
        <strain>ATCC MYA-4620 / CBS 123657 / FGSC 9075 / NRRL 31084 / PH-1</strain>
    </source>
</reference>